<reference key="1">
    <citation type="journal article" date="2002" name="Mol. Biol. Evol.">
        <title>Four new mitochondrial genomes and the increased stability of evolutionary trees of mammals from improved taxon sampling.</title>
        <authorList>
            <person name="Lin Y.-H."/>
            <person name="McLenachan P.A."/>
            <person name="Gore A.R."/>
            <person name="Phillips M.J."/>
            <person name="Ota R."/>
            <person name="Hendy M.D."/>
            <person name="Penny D."/>
        </authorList>
    </citation>
    <scope>NUCLEOTIDE SEQUENCE [GENOMIC DNA]</scope>
</reference>
<gene>
    <name type="primary">MT-ND4L</name>
    <name type="synonym">MTND4L</name>
    <name type="synonym">NADH4L</name>
    <name type="synonym">ND4L</name>
</gene>
<organism>
    <name type="scientific">Rhinolophus monoceros</name>
    <name type="common">Formosan lesser horseshoe bat</name>
    <dbReference type="NCBI Taxonomy" id="169756"/>
    <lineage>
        <taxon>Eukaryota</taxon>
        <taxon>Metazoa</taxon>
        <taxon>Chordata</taxon>
        <taxon>Craniata</taxon>
        <taxon>Vertebrata</taxon>
        <taxon>Euteleostomi</taxon>
        <taxon>Mammalia</taxon>
        <taxon>Eutheria</taxon>
        <taxon>Laurasiatheria</taxon>
        <taxon>Chiroptera</taxon>
        <taxon>Yinpterochiroptera</taxon>
        <taxon>Rhinolophoidea</taxon>
        <taxon>Rhinolophidae</taxon>
        <taxon>Rhinolophinae</taxon>
        <taxon>Rhinolophus</taxon>
    </lineage>
</organism>
<keyword id="KW-0249">Electron transport</keyword>
<keyword id="KW-0472">Membrane</keyword>
<keyword id="KW-0496">Mitochondrion</keyword>
<keyword id="KW-0999">Mitochondrion inner membrane</keyword>
<keyword id="KW-0520">NAD</keyword>
<keyword id="KW-0679">Respiratory chain</keyword>
<keyword id="KW-1278">Translocase</keyword>
<keyword id="KW-0812">Transmembrane</keyword>
<keyword id="KW-1133">Transmembrane helix</keyword>
<keyword id="KW-0813">Transport</keyword>
<keyword id="KW-0830">Ubiquinone</keyword>
<name>NU4LM_RHIMO</name>
<dbReference type="EC" id="7.1.1.2"/>
<dbReference type="EMBL" id="AF406806">
    <property type="protein sequence ID" value="AAK97520.1"/>
    <property type="molecule type" value="Genomic_DNA"/>
</dbReference>
<dbReference type="RefSeq" id="NP_976095.1">
    <property type="nucleotide sequence ID" value="NC_005433.1"/>
</dbReference>
<dbReference type="SMR" id="Q7I5M1"/>
<dbReference type="GeneID" id="2746480"/>
<dbReference type="CTD" id="4539"/>
<dbReference type="GO" id="GO:0005743">
    <property type="term" value="C:mitochondrial inner membrane"/>
    <property type="evidence" value="ECO:0000250"/>
    <property type="project" value="UniProtKB"/>
</dbReference>
<dbReference type="GO" id="GO:0045271">
    <property type="term" value="C:respiratory chain complex I"/>
    <property type="evidence" value="ECO:0000250"/>
    <property type="project" value="UniProtKB"/>
</dbReference>
<dbReference type="GO" id="GO:0008137">
    <property type="term" value="F:NADH dehydrogenase (ubiquinone) activity"/>
    <property type="evidence" value="ECO:0000250"/>
    <property type="project" value="UniProtKB"/>
</dbReference>
<dbReference type="GO" id="GO:0042773">
    <property type="term" value="P:ATP synthesis coupled electron transport"/>
    <property type="evidence" value="ECO:0007669"/>
    <property type="project" value="InterPro"/>
</dbReference>
<dbReference type="FunFam" id="1.10.287.3510:FF:000002">
    <property type="entry name" value="NADH-ubiquinone oxidoreductase chain 4L"/>
    <property type="match status" value="1"/>
</dbReference>
<dbReference type="Gene3D" id="1.10.287.3510">
    <property type="match status" value="1"/>
</dbReference>
<dbReference type="InterPro" id="IPR001133">
    <property type="entry name" value="NADH_UbQ_OxRdtase_chain4L/K"/>
</dbReference>
<dbReference type="InterPro" id="IPR039428">
    <property type="entry name" value="NUOK/Mnh_C1-like"/>
</dbReference>
<dbReference type="PANTHER" id="PTHR11434:SF0">
    <property type="entry name" value="NADH-UBIQUINONE OXIDOREDUCTASE CHAIN 4L"/>
    <property type="match status" value="1"/>
</dbReference>
<dbReference type="PANTHER" id="PTHR11434">
    <property type="entry name" value="NADH-UBIQUINONE OXIDOREDUCTASE SUBUNIT ND4L"/>
    <property type="match status" value="1"/>
</dbReference>
<dbReference type="Pfam" id="PF00420">
    <property type="entry name" value="Oxidored_q2"/>
    <property type="match status" value="1"/>
</dbReference>
<sequence>MALIYTNTLLAFTISLLGLLLYRSHLMSSLLCLEGMMLSMFVMVAVMILNTHLTTSSMMPIVLLVFAACEAALGLSLLVMVSNTYGIDHVQNLNLLQC</sequence>
<accession>Q7I5M1</accession>
<feature type="chain" id="PRO_0000275116" description="NADH-ubiquinone oxidoreductase chain 4L">
    <location>
        <begin position="1"/>
        <end position="98"/>
    </location>
</feature>
<feature type="transmembrane region" description="Helical" evidence="3">
    <location>
        <begin position="1"/>
        <end position="21"/>
    </location>
</feature>
<feature type="transmembrane region" description="Helical" evidence="3">
    <location>
        <begin position="29"/>
        <end position="49"/>
    </location>
</feature>
<feature type="transmembrane region" description="Helical" evidence="3">
    <location>
        <begin position="61"/>
        <end position="81"/>
    </location>
</feature>
<geneLocation type="mitochondrion"/>
<evidence type="ECO:0000250" key="1">
    <source>
        <dbReference type="UniProtKB" id="P03901"/>
    </source>
</evidence>
<evidence type="ECO:0000250" key="2">
    <source>
        <dbReference type="UniProtKB" id="P03902"/>
    </source>
</evidence>
<evidence type="ECO:0000255" key="3"/>
<evidence type="ECO:0000305" key="4"/>
<protein>
    <recommendedName>
        <fullName>NADH-ubiquinone oxidoreductase chain 4L</fullName>
        <ecNumber>7.1.1.2</ecNumber>
    </recommendedName>
    <alternativeName>
        <fullName>NADH dehydrogenase subunit 4L</fullName>
    </alternativeName>
</protein>
<proteinExistence type="inferred from homology"/>
<comment type="function">
    <text evidence="1">Core subunit of the mitochondrial membrane respiratory chain NADH dehydrogenase (Complex I) which catalyzes electron transfer from NADH through the respiratory chain, using ubiquinone as an electron acceptor. Part of the enzyme membrane arm which is embedded in the lipid bilayer and involved in proton translocation.</text>
</comment>
<comment type="catalytic activity">
    <reaction evidence="1">
        <text>a ubiquinone + NADH + 5 H(+)(in) = a ubiquinol + NAD(+) + 4 H(+)(out)</text>
        <dbReference type="Rhea" id="RHEA:29091"/>
        <dbReference type="Rhea" id="RHEA-COMP:9565"/>
        <dbReference type="Rhea" id="RHEA-COMP:9566"/>
        <dbReference type="ChEBI" id="CHEBI:15378"/>
        <dbReference type="ChEBI" id="CHEBI:16389"/>
        <dbReference type="ChEBI" id="CHEBI:17976"/>
        <dbReference type="ChEBI" id="CHEBI:57540"/>
        <dbReference type="ChEBI" id="CHEBI:57945"/>
        <dbReference type="EC" id="7.1.1.2"/>
    </reaction>
    <physiologicalReaction direction="left-to-right" evidence="1">
        <dbReference type="Rhea" id="RHEA:29092"/>
    </physiologicalReaction>
</comment>
<comment type="subunit">
    <text evidence="2">Core subunit of respiratory chain NADH dehydrogenase (Complex I) which is composed of 45 different subunits.</text>
</comment>
<comment type="subcellular location">
    <subcellularLocation>
        <location evidence="2">Mitochondrion inner membrane</location>
        <topology evidence="3">Multi-pass membrane protein</topology>
    </subcellularLocation>
</comment>
<comment type="similarity">
    <text evidence="4">Belongs to the complex I subunit 4L family.</text>
</comment>